<accession>Q0HSW5</accession>
<gene>
    <name evidence="1" type="primary">grpE</name>
    <name type="ordered locus">Shewmr7_2805</name>
</gene>
<organism>
    <name type="scientific">Shewanella sp. (strain MR-7)</name>
    <dbReference type="NCBI Taxonomy" id="60481"/>
    <lineage>
        <taxon>Bacteria</taxon>
        <taxon>Pseudomonadati</taxon>
        <taxon>Pseudomonadota</taxon>
        <taxon>Gammaproteobacteria</taxon>
        <taxon>Alteromonadales</taxon>
        <taxon>Shewanellaceae</taxon>
        <taxon>Shewanella</taxon>
    </lineage>
</organism>
<dbReference type="EMBL" id="CP000444">
    <property type="protein sequence ID" value="ABI43790.1"/>
    <property type="molecule type" value="Genomic_DNA"/>
</dbReference>
<dbReference type="SMR" id="Q0HSW5"/>
<dbReference type="KEGG" id="shm:Shewmr7_2805"/>
<dbReference type="HOGENOM" id="CLU_057217_6_0_6"/>
<dbReference type="GO" id="GO:0005829">
    <property type="term" value="C:cytosol"/>
    <property type="evidence" value="ECO:0007669"/>
    <property type="project" value="TreeGrafter"/>
</dbReference>
<dbReference type="GO" id="GO:0000774">
    <property type="term" value="F:adenyl-nucleotide exchange factor activity"/>
    <property type="evidence" value="ECO:0007669"/>
    <property type="project" value="InterPro"/>
</dbReference>
<dbReference type="GO" id="GO:0042803">
    <property type="term" value="F:protein homodimerization activity"/>
    <property type="evidence" value="ECO:0007669"/>
    <property type="project" value="InterPro"/>
</dbReference>
<dbReference type="GO" id="GO:0051087">
    <property type="term" value="F:protein-folding chaperone binding"/>
    <property type="evidence" value="ECO:0007669"/>
    <property type="project" value="InterPro"/>
</dbReference>
<dbReference type="GO" id="GO:0051082">
    <property type="term" value="F:unfolded protein binding"/>
    <property type="evidence" value="ECO:0007669"/>
    <property type="project" value="TreeGrafter"/>
</dbReference>
<dbReference type="GO" id="GO:0006457">
    <property type="term" value="P:protein folding"/>
    <property type="evidence" value="ECO:0007669"/>
    <property type="project" value="InterPro"/>
</dbReference>
<dbReference type="CDD" id="cd00446">
    <property type="entry name" value="GrpE"/>
    <property type="match status" value="1"/>
</dbReference>
<dbReference type="FunFam" id="2.30.22.10:FF:000001">
    <property type="entry name" value="Protein GrpE"/>
    <property type="match status" value="1"/>
</dbReference>
<dbReference type="Gene3D" id="3.90.20.20">
    <property type="match status" value="1"/>
</dbReference>
<dbReference type="Gene3D" id="2.30.22.10">
    <property type="entry name" value="Head domain of nucleotide exchange factor GrpE"/>
    <property type="match status" value="1"/>
</dbReference>
<dbReference type="HAMAP" id="MF_01151">
    <property type="entry name" value="GrpE"/>
    <property type="match status" value="1"/>
</dbReference>
<dbReference type="InterPro" id="IPR000740">
    <property type="entry name" value="GrpE"/>
</dbReference>
<dbReference type="InterPro" id="IPR013805">
    <property type="entry name" value="GrpE_coiled_coil"/>
</dbReference>
<dbReference type="InterPro" id="IPR009012">
    <property type="entry name" value="GrpE_head"/>
</dbReference>
<dbReference type="NCBIfam" id="NF010737">
    <property type="entry name" value="PRK14139.1"/>
    <property type="match status" value="1"/>
</dbReference>
<dbReference type="NCBIfam" id="NF010738">
    <property type="entry name" value="PRK14140.1"/>
    <property type="match status" value="1"/>
</dbReference>
<dbReference type="NCBIfam" id="NF010748">
    <property type="entry name" value="PRK14150.1"/>
    <property type="match status" value="1"/>
</dbReference>
<dbReference type="PANTHER" id="PTHR21237">
    <property type="entry name" value="GRPE PROTEIN"/>
    <property type="match status" value="1"/>
</dbReference>
<dbReference type="PANTHER" id="PTHR21237:SF23">
    <property type="entry name" value="GRPE PROTEIN HOMOLOG, MITOCHONDRIAL"/>
    <property type="match status" value="1"/>
</dbReference>
<dbReference type="Pfam" id="PF01025">
    <property type="entry name" value="GrpE"/>
    <property type="match status" value="1"/>
</dbReference>
<dbReference type="PRINTS" id="PR00773">
    <property type="entry name" value="GRPEPROTEIN"/>
</dbReference>
<dbReference type="SUPFAM" id="SSF58014">
    <property type="entry name" value="Coiled-coil domain of nucleotide exchange factor GrpE"/>
    <property type="match status" value="1"/>
</dbReference>
<dbReference type="SUPFAM" id="SSF51064">
    <property type="entry name" value="Head domain of nucleotide exchange factor GrpE"/>
    <property type="match status" value="1"/>
</dbReference>
<dbReference type="PROSITE" id="PS01071">
    <property type="entry name" value="GRPE"/>
    <property type="match status" value="1"/>
</dbReference>
<name>GRPE_SHESR</name>
<sequence>MSNESIKAEQDLIQEGVESEVSTEEASLIDELTQANFRIEELEQLLADALAKVEEQKDSVIRAAAEVDNIRRRAAMDVEKANKFALEKFANELLPVLDNMERALQGTNPQDETTKAIYEGVELTQKSFLTAVAKFGVKPIDPQGQAFNPDQHQAIGMQPSAEYPANTVMLVMQKGYELNSRLLRPAMVMVSQGGPSQEINIEA</sequence>
<keyword id="KW-0143">Chaperone</keyword>
<keyword id="KW-0963">Cytoplasm</keyword>
<keyword id="KW-0346">Stress response</keyword>
<comment type="function">
    <text evidence="1">Participates actively in the response to hyperosmotic and heat shock by preventing the aggregation of stress-denatured proteins, in association with DnaK and GrpE. It is the nucleotide exchange factor for DnaK and may function as a thermosensor. Unfolded proteins bind initially to DnaJ; upon interaction with the DnaJ-bound protein, DnaK hydrolyzes its bound ATP, resulting in the formation of a stable complex. GrpE releases ADP from DnaK; ATP binding to DnaK triggers the release of the substrate protein, thus completing the reaction cycle. Several rounds of ATP-dependent interactions between DnaJ, DnaK and GrpE are required for fully efficient folding.</text>
</comment>
<comment type="subunit">
    <text evidence="1">Homodimer.</text>
</comment>
<comment type="subcellular location">
    <subcellularLocation>
        <location evidence="1">Cytoplasm</location>
    </subcellularLocation>
</comment>
<comment type="similarity">
    <text evidence="1">Belongs to the GrpE family.</text>
</comment>
<feature type="chain" id="PRO_1000137626" description="Protein GrpE">
    <location>
        <begin position="1"/>
        <end position="203"/>
    </location>
</feature>
<feature type="region of interest" description="Disordered" evidence="2">
    <location>
        <begin position="1"/>
        <end position="20"/>
    </location>
</feature>
<feature type="compositionally biased region" description="Basic and acidic residues" evidence="2">
    <location>
        <begin position="1"/>
        <end position="10"/>
    </location>
</feature>
<protein>
    <recommendedName>
        <fullName evidence="1">Protein GrpE</fullName>
    </recommendedName>
    <alternativeName>
        <fullName evidence="1">HSP-70 cofactor</fullName>
    </alternativeName>
</protein>
<proteinExistence type="inferred from homology"/>
<reference key="1">
    <citation type="submission" date="2006-08" db="EMBL/GenBank/DDBJ databases">
        <title>Complete sequence of chromosome 1 of Shewanella sp. MR-7.</title>
        <authorList>
            <person name="Copeland A."/>
            <person name="Lucas S."/>
            <person name="Lapidus A."/>
            <person name="Barry K."/>
            <person name="Detter J.C."/>
            <person name="Glavina del Rio T."/>
            <person name="Hammon N."/>
            <person name="Israni S."/>
            <person name="Dalin E."/>
            <person name="Tice H."/>
            <person name="Pitluck S."/>
            <person name="Kiss H."/>
            <person name="Brettin T."/>
            <person name="Bruce D."/>
            <person name="Han C."/>
            <person name="Tapia R."/>
            <person name="Gilna P."/>
            <person name="Schmutz J."/>
            <person name="Larimer F."/>
            <person name="Land M."/>
            <person name="Hauser L."/>
            <person name="Kyrpides N."/>
            <person name="Mikhailova N."/>
            <person name="Nealson K."/>
            <person name="Konstantinidis K."/>
            <person name="Klappenbach J."/>
            <person name="Tiedje J."/>
            <person name="Richardson P."/>
        </authorList>
    </citation>
    <scope>NUCLEOTIDE SEQUENCE [LARGE SCALE GENOMIC DNA]</scope>
    <source>
        <strain>MR-7</strain>
    </source>
</reference>
<evidence type="ECO:0000255" key="1">
    <source>
        <dbReference type="HAMAP-Rule" id="MF_01151"/>
    </source>
</evidence>
<evidence type="ECO:0000256" key="2">
    <source>
        <dbReference type="SAM" id="MobiDB-lite"/>
    </source>
</evidence>